<name>CDD_ECOK1</name>
<sequence>MHPRFQTAFAQLADNLQSALEPILADKYFPALLTGEQVSSLKSATGLDEDALAFALLPLAAACARTPLSNFNVGAIARGVSGTWYFGANMEFIGATMQQTVHAEQSAISHAWLSGEKALAAITVNYTPCGHCRQFMNELNSGLDLRIHLPGREAHALRDYLPDAFGPKDLEIKTLLMDEQDHGYALTGDALSQAAIAAANRSHMPYSKSPSGVALECKDGRIFSGSYAENAAFNPTLPPLQGALILLNLKGYDYPDIQRAVLAEKADAPLIQWDATSATLKALGCHNIDRVLLA</sequence>
<gene>
    <name evidence="1" type="primary">cdd</name>
    <name type="ordered locus">Ecok1_20500</name>
    <name type="ORF">APECO1_4407</name>
</gene>
<evidence type="ECO:0000255" key="1">
    <source>
        <dbReference type="HAMAP-Rule" id="MF_01558"/>
    </source>
</evidence>
<evidence type="ECO:0000255" key="2">
    <source>
        <dbReference type="PROSITE-ProRule" id="PRU01083"/>
    </source>
</evidence>
<comment type="function">
    <text evidence="1">This enzyme scavenges exogenous and endogenous cytidine and 2'-deoxycytidine for UMP synthesis.</text>
</comment>
<comment type="catalytic activity">
    <reaction evidence="1">
        <text>cytidine + H2O + H(+) = uridine + NH4(+)</text>
        <dbReference type="Rhea" id="RHEA:16069"/>
        <dbReference type="ChEBI" id="CHEBI:15377"/>
        <dbReference type="ChEBI" id="CHEBI:15378"/>
        <dbReference type="ChEBI" id="CHEBI:16704"/>
        <dbReference type="ChEBI" id="CHEBI:17562"/>
        <dbReference type="ChEBI" id="CHEBI:28938"/>
        <dbReference type="EC" id="3.5.4.5"/>
    </reaction>
</comment>
<comment type="catalytic activity">
    <reaction evidence="1">
        <text>2'-deoxycytidine + H2O + H(+) = 2'-deoxyuridine + NH4(+)</text>
        <dbReference type="Rhea" id="RHEA:13433"/>
        <dbReference type="ChEBI" id="CHEBI:15377"/>
        <dbReference type="ChEBI" id="CHEBI:15378"/>
        <dbReference type="ChEBI" id="CHEBI:15698"/>
        <dbReference type="ChEBI" id="CHEBI:16450"/>
        <dbReference type="ChEBI" id="CHEBI:28938"/>
        <dbReference type="EC" id="3.5.4.5"/>
    </reaction>
</comment>
<comment type="cofactor">
    <cofactor evidence="1">
        <name>Zn(2+)</name>
        <dbReference type="ChEBI" id="CHEBI:29105"/>
    </cofactor>
    <text evidence="1">Binds 1 zinc ion.</text>
</comment>
<comment type="subunit">
    <text evidence="1">Homodimer.</text>
</comment>
<comment type="similarity">
    <text evidence="1">Belongs to the cytidine and deoxycytidylate deaminase family.</text>
</comment>
<reference key="1">
    <citation type="journal article" date="2007" name="J. Bacteriol.">
        <title>The genome sequence of avian pathogenic Escherichia coli strain O1:K1:H7 shares strong similarities with human extraintestinal pathogenic E. coli genomes.</title>
        <authorList>
            <person name="Johnson T.J."/>
            <person name="Kariyawasam S."/>
            <person name="Wannemuehler Y."/>
            <person name="Mangiamele P."/>
            <person name="Johnson S.J."/>
            <person name="Doetkott C."/>
            <person name="Skyberg J.A."/>
            <person name="Lynne A.M."/>
            <person name="Johnson J.R."/>
            <person name="Nolan L.K."/>
        </authorList>
    </citation>
    <scope>NUCLEOTIDE SEQUENCE [LARGE SCALE GENOMIC DNA]</scope>
</reference>
<accession>A1AD04</accession>
<proteinExistence type="inferred from homology"/>
<dbReference type="EC" id="3.5.4.5" evidence="1"/>
<dbReference type="EMBL" id="CP000468">
    <property type="protein sequence ID" value="ABJ01544.1"/>
    <property type="molecule type" value="Genomic_DNA"/>
</dbReference>
<dbReference type="RefSeq" id="WP_000553553.1">
    <property type="nucleotide sequence ID" value="NZ_CADILS010000004.1"/>
</dbReference>
<dbReference type="SMR" id="A1AD04"/>
<dbReference type="KEGG" id="ecv:APECO1_4407"/>
<dbReference type="HOGENOM" id="CLU_052424_0_0_6"/>
<dbReference type="Proteomes" id="UP000008216">
    <property type="component" value="Chromosome"/>
</dbReference>
<dbReference type="GO" id="GO:0005829">
    <property type="term" value="C:cytosol"/>
    <property type="evidence" value="ECO:0007669"/>
    <property type="project" value="TreeGrafter"/>
</dbReference>
<dbReference type="GO" id="GO:0004126">
    <property type="term" value="F:cytidine deaminase activity"/>
    <property type="evidence" value="ECO:0007669"/>
    <property type="project" value="UniProtKB-UniRule"/>
</dbReference>
<dbReference type="GO" id="GO:0042802">
    <property type="term" value="F:identical protein binding"/>
    <property type="evidence" value="ECO:0007669"/>
    <property type="project" value="UniProtKB-ARBA"/>
</dbReference>
<dbReference type="GO" id="GO:0008270">
    <property type="term" value="F:zinc ion binding"/>
    <property type="evidence" value="ECO:0007669"/>
    <property type="project" value="UniProtKB-UniRule"/>
</dbReference>
<dbReference type="GO" id="GO:0009972">
    <property type="term" value="P:cytidine deamination"/>
    <property type="evidence" value="ECO:0007669"/>
    <property type="project" value="InterPro"/>
</dbReference>
<dbReference type="CDD" id="cd01283">
    <property type="entry name" value="cytidine_deaminase"/>
    <property type="match status" value="2"/>
</dbReference>
<dbReference type="FunFam" id="3.40.140.10:FF:000006">
    <property type="entry name" value="Cytidine deaminase"/>
    <property type="match status" value="1"/>
</dbReference>
<dbReference type="FunFam" id="3.40.140.10:FF:000007">
    <property type="entry name" value="Cytidine deaminase"/>
    <property type="match status" value="1"/>
</dbReference>
<dbReference type="Gene3D" id="3.40.140.10">
    <property type="entry name" value="Cytidine Deaminase, domain 2"/>
    <property type="match status" value="2"/>
</dbReference>
<dbReference type="HAMAP" id="MF_01558">
    <property type="entry name" value="Cyt_deam"/>
    <property type="match status" value="1"/>
</dbReference>
<dbReference type="InterPro" id="IPR016192">
    <property type="entry name" value="APOBEC/CMP_deaminase_Zn-bd"/>
</dbReference>
<dbReference type="InterPro" id="IPR002125">
    <property type="entry name" value="CMP_dCMP_dom"/>
</dbReference>
<dbReference type="InterPro" id="IPR013171">
    <property type="entry name" value="Cyd/dCyd_deaminase_Zn-bd"/>
</dbReference>
<dbReference type="InterPro" id="IPR050202">
    <property type="entry name" value="Cyt/Deoxycyt_deaminase"/>
</dbReference>
<dbReference type="InterPro" id="IPR006263">
    <property type="entry name" value="Cyt_deam_dimer"/>
</dbReference>
<dbReference type="InterPro" id="IPR016193">
    <property type="entry name" value="Cytidine_deaminase-like"/>
</dbReference>
<dbReference type="InterPro" id="IPR020797">
    <property type="entry name" value="Cytidine_deaminase_bacteria"/>
</dbReference>
<dbReference type="NCBIfam" id="TIGR01355">
    <property type="entry name" value="cyt_deam_dimer"/>
    <property type="match status" value="1"/>
</dbReference>
<dbReference type="NCBIfam" id="NF006537">
    <property type="entry name" value="PRK09027.1"/>
    <property type="match status" value="1"/>
</dbReference>
<dbReference type="PANTHER" id="PTHR11644">
    <property type="entry name" value="CYTIDINE DEAMINASE"/>
    <property type="match status" value="1"/>
</dbReference>
<dbReference type="PANTHER" id="PTHR11644:SF2">
    <property type="entry name" value="CYTIDINE DEAMINASE"/>
    <property type="match status" value="1"/>
</dbReference>
<dbReference type="Pfam" id="PF00383">
    <property type="entry name" value="dCMP_cyt_deam_1"/>
    <property type="match status" value="1"/>
</dbReference>
<dbReference type="Pfam" id="PF08211">
    <property type="entry name" value="dCMP_cyt_deam_2"/>
    <property type="match status" value="1"/>
</dbReference>
<dbReference type="PIRSF" id="PIRSF006334">
    <property type="entry name" value="Cdd_plus_pseudo"/>
    <property type="match status" value="1"/>
</dbReference>
<dbReference type="SUPFAM" id="SSF53927">
    <property type="entry name" value="Cytidine deaminase-like"/>
    <property type="match status" value="2"/>
</dbReference>
<dbReference type="PROSITE" id="PS00903">
    <property type="entry name" value="CYT_DCMP_DEAMINASES_1"/>
    <property type="match status" value="1"/>
</dbReference>
<dbReference type="PROSITE" id="PS51747">
    <property type="entry name" value="CYT_DCMP_DEAMINASES_2"/>
    <property type="match status" value="2"/>
</dbReference>
<organism>
    <name type="scientific">Escherichia coli O1:K1 / APEC</name>
    <dbReference type="NCBI Taxonomy" id="405955"/>
    <lineage>
        <taxon>Bacteria</taxon>
        <taxon>Pseudomonadati</taxon>
        <taxon>Pseudomonadota</taxon>
        <taxon>Gammaproteobacteria</taxon>
        <taxon>Enterobacterales</taxon>
        <taxon>Enterobacteriaceae</taxon>
        <taxon>Escherichia</taxon>
    </lineage>
</organism>
<keyword id="KW-0378">Hydrolase</keyword>
<keyword id="KW-0479">Metal-binding</keyword>
<keyword id="KW-1185">Reference proteome</keyword>
<keyword id="KW-0862">Zinc</keyword>
<feature type="chain" id="PRO_1000068950" description="Cytidine deaminase">
    <location>
        <begin position="1"/>
        <end position="294"/>
    </location>
</feature>
<feature type="domain" description="CMP/dCMP-type deaminase 1" evidence="2">
    <location>
        <begin position="48"/>
        <end position="168"/>
    </location>
</feature>
<feature type="domain" description="CMP/dCMP-type deaminase 2" evidence="2">
    <location>
        <begin position="186"/>
        <end position="294"/>
    </location>
</feature>
<feature type="active site" description="Proton donor" evidence="1">
    <location>
        <position position="104"/>
    </location>
</feature>
<feature type="binding site" evidence="1">
    <location>
        <begin position="89"/>
        <end position="91"/>
    </location>
    <ligand>
        <name>substrate</name>
    </ligand>
</feature>
<feature type="binding site" evidence="1">
    <location>
        <position position="102"/>
    </location>
    <ligand>
        <name>Zn(2+)</name>
        <dbReference type="ChEBI" id="CHEBI:29105"/>
        <note>catalytic</note>
    </ligand>
</feature>
<feature type="binding site" evidence="1">
    <location>
        <position position="129"/>
    </location>
    <ligand>
        <name>Zn(2+)</name>
        <dbReference type="ChEBI" id="CHEBI:29105"/>
        <note>catalytic</note>
    </ligand>
</feature>
<feature type="binding site" evidence="1">
    <location>
        <position position="132"/>
    </location>
    <ligand>
        <name>Zn(2+)</name>
        <dbReference type="ChEBI" id="CHEBI:29105"/>
        <note>catalytic</note>
    </ligand>
</feature>
<protein>
    <recommendedName>
        <fullName evidence="1">Cytidine deaminase</fullName>
        <ecNumber evidence="1">3.5.4.5</ecNumber>
    </recommendedName>
    <alternativeName>
        <fullName evidence="1">Cytidine aminohydrolase</fullName>
        <shortName evidence="1">CDA</shortName>
    </alternativeName>
</protein>